<sequence length="245" mass="26269">MTSPATLVLIPARMAATRLPGKPLLDIAGLPMVVQVLRRAQAAEIGRVAVATDAPEIAAAVTAHGGEVVMTRADHPSGSDRIFEALQTLDPDRKIETVINLQGDFPTIRPEQIGAVLEPLADPAVDIATLAAEIHTEEEATNPNVVKVIGSPLAADRLRALYFTRATAPWGDGPRYHHIGLYGYRRAALERFVALPPSPLELREKLEQLRALEAGMRIDVGIVDTVPRGVDTPADLETARRVLGG</sequence>
<proteinExistence type="inferred from homology"/>
<organism>
    <name type="scientific">Rhodopseudomonas palustris (strain ATCC BAA-98 / CGA009)</name>
    <dbReference type="NCBI Taxonomy" id="258594"/>
    <lineage>
        <taxon>Bacteria</taxon>
        <taxon>Pseudomonadati</taxon>
        <taxon>Pseudomonadota</taxon>
        <taxon>Alphaproteobacteria</taxon>
        <taxon>Hyphomicrobiales</taxon>
        <taxon>Nitrobacteraceae</taxon>
        <taxon>Rhodopseudomonas</taxon>
    </lineage>
</organism>
<protein>
    <recommendedName>
        <fullName evidence="1">3-deoxy-manno-octulosonate cytidylyltransferase</fullName>
        <ecNumber evidence="1">2.7.7.38</ecNumber>
    </recommendedName>
    <alternativeName>
        <fullName evidence="1">CMP-2-keto-3-deoxyoctulosonic acid synthase</fullName>
        <shortName evidence="1">CKS</shortName>
        <shortName evidence="1">CMP-KDO synthase</shortName>
    </alternativeName>
</protein>
<comment type="function">
    <text evidence="1">Activates KDO (a required 8-carbon sugar) for incorporation into bacterial lipopolysaccharide in Gram-negative bacteria.</text>
</comment>
<comment type="catalytic activity">
    <reaction evidence="1">
        <text>3-deoxy-alpha-D-manno-oct-2-ulosonate + CTP = CMP-3-deoxy-beta-D-manno-octulosonate + diphosphate</text>
        <dbReference type="Rhea" id="RHEA:23448"/>
        <dbReference type="ChEBI" id="CHEBI:33019"/>
        <dbReference type="ChEBI" id="CHEBI:37563"/>
        <dbReference type="ChEBI" id="CHEBI:85986"/>
        <dbReference type="ChEBI" id="CHEBI:85987"/>
        <dbReference type="EC" id="2.7.7.38"/>
    </reaction>
</comment>
<comment type="pathway">
    <text evidence="1">Nucleotide-sugar biosynthesis; CMP-3-deoxy-D-manno-octulosonate biosynthesis; CMP-3-deoxy-D-manno-octulosonate from 3-deoxy-D-manno-octulosonate and CTP: step 1/1.</text>
</comment>
<comment type="pathway">
    <text evidence="1">Bacterial outer membrane biogenesis; lipopolysaccharide biosynthesis.</text>
</comment>
<comment type="subcellular location">
    <subcellularLocation>
        <location evidence="1">Cytoplasm</location>
    </subcellularLocation>
</comment>
<comment type="similarity">
    <text evidence="1">Belongs to the KdsB family.</text>
</comment>
<reference key="1">
    <citation type="journal article" date="2004" name="Nat. Biotechnol.">
        <title>Complete genome sequence of the metabolically versatile photosynthetic bacterium Rhodopseudomonas palustris.</title>
        <authorList>
            <person name="Larimer F.W."/>
            <person name="Chain P."/>
            <person name="Hauser L."/>
            <person name="Lamerdin J.E."/>
            <person name="Malfatti S."/>
            <person name="Do L."/>
            <person name="Land M.L."/>
            <person name="Pelletier D.A."/>
            <person name="Beatty J.T."/>
            <person name="Lang A.S."/>
            <person name="Tabita F.R."/>
            <person name="Gibson J.L."/>
            <person name="Hanson T.E."/>
            <person name="Bobst C."/>
            <person name="Torres y Torres J.L."/>
            <person name="Peres C."/>
            <person name="Harrison F.H."/>
            <person name="Gibson J."/>
            <person name="Harwood C.S."/>
        </authorList>
    </citation>
    <scope>NUCLEOTIDE SEQUENCE [LARGE SCALE GENOMIC DNA]</scope>
    <source>
        <strain>ATCC BAA-98 / CGA009</strain>
    </source>
</reference>
<dbReference type="EC" id="2.7.7.38" evidence="1"/>
<dbReference type="EMBL" id="BX572604">
    <property type="protein sequence ID" value="CAE29135.1"/>
    <property type="molecule type" value="Genomic_DNA"/>
</dbReference>
<dbReference type="RefSeq" id="WP_011159233.1">
    <property type="nucleotide sequence ID" value="NZ_CP116810.1"/>
</dbReference>
<dbReference type="SMR" id="Q6N3J9"/>
<dbReference type="STRING" id="258594.RPA3694"/>
<dbReference type="GeneID" id="66894800"/>
<dbReference type="eggNOG" id="COG1212">
    <property type="taxonomic scope" value="Bacteria"/>
</dbReference>
<dbReference type="HOGENOM" id="CLU_065038_0_1_5"/>
<dbReference type="PhylomeDB" id="Q6N3J9"/>
<dbReference type="UniPathway" id="UPA00030"/>
<dbReference type="UniPathway" id="UPA00358">
    <property type="reaction ID" value="UER00476"/>
</dbReference>
<dbReference type="GO" id="GO:0005829">
    <property type="term" value="C:cytosol"/>
    <property type="evidence" value="ECO:0007669"/>
    <property type="project" value="TreeGrafter"/>
</dbReference>
<dbReference type="GO" id="GO:0008690">
    <property type="term" value="F:3-deoxy-manno-octulosonate cytidylyltransferase activity"/>
    <property type="evidence" value="ECO:0007669"/>
    <property type="project" value="UniProtKB-UniRule"/>
</dbReference>
<dbReference type="GO" id="GO:0033468">
    <property type="term" value="P:CMP-keto-3-deoxy-D-manno-octulosonic acid biosynthetic process"/>
    <property type="evidence" value="ECO:0007669"/>
    <property type="project" value="UniProtKB-UniRule"/>
</dbReference>
<dbReference type="GO" id="GO:0009103">
    <property type="term" value="P:lipopolysaccharide biosynthetic process"/>
    <property type="evidence" value="ECO:0007669"/>
    <property type="project" value="UniProtKB-UniRule"/>
</dbReference>
<dbReference type="CDD" id="cd02517">
    <property type="entry name" value="CMP-KDO-Synthetase"/>
    <property type="match status" value="1"/>
</dbReference>
<dbReference type="Gene3D" id="3.90.550.10">
    <property type="entry name" value="Spore Coat Polysaccharide Biosynthesis Protein SpsA, Chain A"/>
    <property type="match status" value="1"/>
</dbReference>
<dbReference type="HAMAP" id="MF_00057">
    <property type="entry name" value="KdsB"/>
    <property type="match status" value="1"/>
</dbReference>
<dbReference type="InterPro" id="IPR003329">
    <property type="entry name" value="Cytidylyl_trans"/>
</dbReference>
<dbReference type="InterPro" id="IPR004528">
    <property type="entry name" value="KdsB"/>
</dbReference>
<dbReference type="InterPro" id="IPR029044">
    <property type="entry name" value="Nucleotide-diphossugar_trans"/>
</dbReference>
<dbReference type="NCBIfam" id="TIGR00466">
    <property type="entry name" value="kdsB"/>
    <property type="match status" value="1"/>
</dbReference>
<dbReference type="NCBIfam" id="NF003948">
    <property type="entry name" value="PRK05450.1-1"/>
    <property type="match status" value="1"/>
</dbReference>
<dbReference type="NCBIfam" id="NF003952">
    <property type="entry name" value="PRK05450.1-5"/>
    <property type="match status" value="1"/>
</dbReference>
<dbReference type="PANTHER" id="PTHR42866">
    <property type="entry name" value="3-DEOXY-MANNO-OCTULOSONATE CYTIDYLYLTRANSFERASE"/>
    <property type="match status" value="1"/>
</dbReference>
<dbReference type="PANTHER" id="PTHR42866:SF2">
    <property type="entry name" value="3-DEOXY-MANNO-OCTULOSONATE CYTIDYLYLTRANSFERASE, MITOCHONDRIAL"/>
    <property type="match status" value="1"/>
</dbReference>
<dbReference type="Pfam" id="PF02348">
    <property type="entry name" value="CTP_transf_3"/>
    <property type="match status" value="1"/>
</dbReference>
<dbReference type="SUPFAM" id="SSF53448">
    <property type="entry name" value="Nucleotide-diphospho-sugar transferases"/>
    <property type="match status" value="1"/>
</dbReference>
<evidence type="ECO:0000255" key="1">
    <source>
        <dbReference type="HAMAP-Rule" id="MF_00057"/>
    </source>
</evidence>
<keyword id="KW-0963">Cytoplasm</keyword>
<keyword id="KW-0448">Lipopolysaccharide biosynthesis</keyword>
<keyword id="KW-0548">Nucleotidyltransferase</keyword>
<keyword id="KW-0808">Transferase</keyword>
<feature type="chain" id="PRO_0000370135" description="3-deoxy-manno-octulosonate cytidylyltransferase">
    <location>
        <begin position="1"/>
        <end position="245"/>
    </location>
</feature>
<accession>Q6N3J9</accession>
<gene>
    <name evidence="1" type="primary">kdsB</name>
    <name type="ordered locus">RPA3694</name>
</gene>
<name>KDSB_RHOPA</name>